<proteinExistence type="inferred from homology"/>
<keyword id="KW-0067">ATP-binding</keyword>
<keyword id="KW-0119">Carbohydrate metabolism</keyword>
<keyword id="KW-0418">Kinase</keyword>
<keyword id="KW-0547">Nucleotide-binding</keyword>
<keyword id="KW-1185">Reference proteome</keyword>
<keyword id="KW-0808">Transferase</keyword>
<name>ANMK_CROS8</name>
<sequence>MKSGRYIGVMSGTSLDGVDVVLAAIDEHMVAQQASLSWPMPPEIKKAILDICQGQPLTLSQLGRLDHQLGCLFADAVNALMEQQKLKPEDVMAIGCHGQTVWHEPTGSAPHTMQIGDNNQIVARTGVSVVGDFRRRDMALGGQGAPLVPAFHQALLAHPTERRMVLNIGGIANLSLLFPGQPVKGFDTGPGNMLMDAWIWRQKGKPFDKDGEWAASGNVVQPLLQKMLRDPYFSTPAPKSTGREYFNYGWIERQLSSFAGLPAQDVQATLLELTASTIARDVQLSGGAERLMICGGGGRNPRLVARLAALLPGTEVSSTDEMGIRGDDMEALAFAWLAYRTLSGKPGNLPSVTGAREASVIGAVFPANPLNNRSLPTFPAPPGR</sequence>
<evidence type="ECO:0000255" key="1">
    <source>
        <dbReference type="HAMAP-Rule" id="MF_01270"/>
    </source>
</evidence>
<accession>A7MMK0</accession>
<comment type="function">
    <text evidence="1">Catalyzes the specific phosphorylation of 1,6-anhydro-N-acetylmuramic acid (anhMurNAc) with the simultaneous cleavage of the 1,6-anhydro ring, generating MurNAc-6-P. Is required for the utilization of anhMurNAc either imported from the medium or derived from its own cell wall murein, and thus plays a role in cell wall recycling.</text>
</comment>
<comment type="catalytic activity">
    <reaction evidence="1">
        <text>1,6-anhydro-N-acetyl-beta-muramate + ATP + H2O = N-acetyl-D-muramate 6-phosphate + ADP + H(+)</text>
        <dbReference type="Rhea" id="RHEA:24952"/>
        <dbReference type="ChEBI" id="CHEBI:15377"/>
        <dbReference type="ChEBI" id="CHEBI:15378"/>
        <dbReference type="ChEBI" id="CHEBI:30616"/>
        <dbReference type="ChEBI" id="CHEBI:58690"/>
        <dbReference type="ChEBI" id="CHEBI:58722"/>
        <dbReference type="ChEBI" id="CHEBI:456216"/>
        <dbReference type="EC" id="2.7.1.170"/>
    </reaction>
</comment>
<comment type="pathway">
    <text evidence="1">Amino-sugar metabolism; 1,6-anhydro-N-acetylmuramate degradation.</text>
</comment>
<comment type="pathway">
    <text evidence="1">Cell wall biogenesis; peptidoglycan recycling.</text>
</comment>
<comment type="similarity">
    <text evidence="1">Belongs to the anhydro-N-acetylmuramic acid kinase family.</text>
</comment>
<dbReference type="EC" id="2.7.1.170" evidence="1"/>
<dbReference type="EMBL" id="CP000783">
    <property type="protein sequence ID" value="ABU77252.1"/>
    <property type="molecule type" value="Genomic_DNA"/>
</dbReference>
<dbReference type="RefSeq" id="WP_007891805.1">
    <property type="nucleotide sequence ID" value="NC_009778.1"/>
</dbReference>
<dbReference type="SMR" id="A7MMK0"/>
<dbReference type="GeneID" id="56730772"/>
<dbReference type="KEGG" id="esa:ESA_01999"/>
<dbReference type="HOGENOM" id="CLU_038782_0_0_6"/>
<dbReference type="UniPathway" id="UPA00343"/>
<dbReference type="UniPathway" id="UPA00544"/>
<dbReference type="Proteomes" id="UP000000260">
    <property type="component" value="Chromosome"/>
</dbReference>
<dbReference type="GO" id="GO:0005524">
    <property type="term" value="F:ATP binding"/>
    <property type="evidence" value="ECO:0007669"/>
    <property type="project" value="UniProtKB-UniRule"/>
</dbReference>
<dbReference type="GO" id="GO:0016301">
    <property type="term" value="F:kinase activity"/>
    <property type="evidence" value="ECO:0007669"/>
    <property type="project" value="UniProtKB-KW"/>
</dbReference>
<dbReference type="GO" id="GO:0016773">
    <property type="term" value="F:phosphotransferase activity, alcohol group as acceptor"/>
    <property type="evidence" value="ECO:0007669"/>
    <property type="project" value="UniProtKB-UniRule"/>
</dbReference>
<dbReference type="GO" id="GO:0097175">
    <property type="term" value="P:1,6-anhydro-N-acetyl-beta-muramic acid catabolic process"/>
    <property type="evidence" value="ECO:0007669"/>
    <property type="project" value="UniProtKB-UniRule"/>
</dbReference>
<dbReference type="GO" id="GO:0006040">
    <property type="term" value="P:amino sugar metabolic process"/>
    <property type="evidence" value="ECO:0007669"/>
    <property type="project" value="InterPro"/>
</dbReference>
<dbReference type="GO" id="GO:0009254">
    <property type="term" value="P:peptidoglycan turnover"/>
    <property type="evidence" value="ECO:0007669"/>
    <property type="project" value="UniProtKB-UniRule"/>
</dbReference>
<dbReference type="CDD" id="cd24050">
    <property type="entry name" value="ASKHA_NBD_ANMK"/>
    <property type="match status" value="1"/>
</dbReference>
<dbReference type="Gene3D" id="3.30.420.40">
    <property type="match status" value="2"/>
</dbReference>
<dbReference type="HAMAP" id="MF_01270">
    <property type="entry name" value="AnhMurNAc_kinase"/>
    <property type="match status" value="1"/>
</dbReference>
<dbReference type="InterPro" id="IPR005338">
    <property type="entry name" value="Anhydro_N_Ac-Mur_kinase"/>
</dbReference>
<dbReference type="InterPro" id="IPR043129">
    <property type="entry name" value="ATPase_NBD"/>
</dbReference>
<dbReference type="NCBIfam" id="NF007138">
    <property type="entry name" value="PRK09585.1-1"/>
    <property type="match status" value="1"/>
</dbReference>
<dbReference type="NCBIfam" id="NF007139">
    <property type="entry name" value="PRK09585.1-3"/>
    <property type="match status" value="1"/>
</dbReference>
<dbReference type="NCBIfam" id="NF007148">
    <property type="entry name" value="PRK09585.3-2"/>
    <property type="match status" value="1"/>
</dbReference>
<dbReference type="PANTHER" id="PTHR30605">
    <property type="entry name" value="ANHYDRO-N-ACETYLMURAMIC ACID KINASE"/>
    <property type="match status" value="1"/>
</dbReference>
<dbReference type="PANTHER" id="PTHR30605:SF0">
    <property type="entry name" value="ANHYDRO-N-ACETYLMURAMIC ACID KINASE"/>
    <property type="match status" value="1"/>
</dbReference>
<dbReference type="Pfam" id="PF03702">
    <property type="entry name" value="AnmK"/>
    <property type="match status" value="1"/>
</dbReference>
<dbReference type="SUPFAM" id="SSF53067">
    <property type="entry name" value="Actin-like ATPase domain"/>
    <property type="match status" value="1"/>
</dbReference>
<organism>
    <name type="scientific">Cronobacter sakazakii (strain ATCC BAA-894)</name>
    <name type="common">Enterobacter sakazakii</name>
    <dbReference type="NCBI Taxonomy" id="290339"/>
    <lineage>
        <taxon>Bacteria</taxon>
        <taxon>Pseudomonadati</taxon>
        <taxon>Pseudomonadota</taxon>
        <taxon>Gammaproteobacteria</taxon>
        <taxon>Enterobacterales</taxon>
        <taxon>Enterobacteriaceae</taxon>
        <taxon>Cronobacter</taxon>
    </lineage>
</organism>
<gene>
    <name evidence="1" type="primary">anmK</name>
    <name type="ordered locus">ESA_01999</name>
</gene>
<feature type="chain" id="PRO_1000067349" description="Anhydro-N-acetylmuramic acid kinase">
    <location>
        <begin position="1"/>
        <end position="384"/>
    </location>
</feature>
<feature type="binding site" evidence="1">
    <location>
        <begin position="12"/>
        <end position="19"/>
    </location>
    <ligand>
        <name>ATP</name>
        <dbReference type="ChEBI" id="CHEBI:30616"/>
    </ligand>
</feature>
<reference key="1">
    <citation type="journal article" date="2010" name="PLoS ONE">
        <title>Genome sequence of Cronobacter sakazakii BAA-894 and comparative genomic hybridization analysis with other Cronobacter species.</title>
        <authorList>
            <person name="Kucerova E."/>
            <person name="Clifton S.W."/>
            <person name="Xia X.Q."/>
            <person name="Long F."/>
            <person name="Porwollik S."/>
            <person name="Fulton L."/>
            <person name="Fronick C."/>
            <person name="Minx P."/>
            <person name="Kyung K."/>
            <person name="Warren W."/>
            <person name="Fulton R."/>
            <person name="Feng D."/>
            <person name="Wollam A."/>
            <person name="Shah N."/>
            <person name="Bhonagiri V."/>
            <person name="Nash W.E."/>
            <person name="Hallsworth-Pepin K."/>
            <person name="Wilson R.K."/>
            <person name="McClelland M."/>
            <person name="Forsythe S.J."/>
        </authorList>
    </citation>
    <scope>NUCLEOTIDE SEQUENCE [LARGE SCALE GENOMIC DNA]</scope>
    <source>
        <strain>ATCC BAA-894</strain>
    </source>
</reference>
<protein>
    <recommendedName>
        <fullName evidence="1">Anhydro-N-acetylmuramic acid kinase</fullName>
        <ecNumber evidence="1">2.7.1.170</ecNumber>
    </recommendedName>
    <alternativeName>
        <fullName evidence="1">AnhMurNAc kinase</fullName>
    </alternativeName>
</protein>